<dbReference type="EC" id="5.4.99.25" evidence="1"/>
<dbReference type="EMBL" id="AE000783">
    <property type="protein sequence ID" value="AAC67151.1"/>
    <property type="molecule type" value="Genomic_DNA"/>
</dbReference>
<dbReference type="PIR" id="B70200">
    <property type="entry name" value="B70200"/>
</dbReference>
<dbReference type="RefSeq" id="NP_212937.1">
    <property type="nucleotide sequence ID" value="NC_001318.1"/>
</dbReference>
<dbReference type="RefSeq" id="WP_002657230.1">
    <property type="nucleotide sequence ID" value="NC_001318.1"/>
</dbReference>
<dbReference type="SMR" id="O51743"/>
<dbReference type="STRING" id="224326.BB_0803"/>
<dbReference type="PaxDb" id="224326-BB_0803"/>
<dbReference type="EnsemblBacteria" id="AAC67151">
    <property type="protein sequence ID" value="AAC67151"/>
    <property type="gene ID" value="BB_0803"/>
</dbReference>
<dbReference type="GeneID" id="56567382"/>
<dbReference type="KEGG" id="bbu:BB_0803"/>
<dbReference type="PATRIC" id="fig|224326.49.peg.1195"/>
<dbReference type="HOGENOM" id="CLU_032087_0_2_12"/>
<dbReference type="OrthoDB" id="9802309at2"/>
<dbReference type="Proteomes" id="UP000001807">
    <property type="component" value="Chromosome"/>
</dbReference>
<dbReference type="GO" id="GO:0003723">
    <property type="term" value="F:RNA binding"/>
    <property type="evidence" value="ECO:0007669"/>
    <property type="project" value="InterPro"/>
</dbReference>
<dbReference type="GO" id="GO:0160148">
    <property type="term" value="F:tRNA pseudouridine(55) synthase activity"/>
    <property type="evidence" value="ECO:0007669"/>
    <property type="project" value="UniProtKB-EC"/>
</dbReference>
<dbReference type="GO" id="GO:1990481">
    <property type="term" value="P:mRNA pseudouridine synthesis"/>
    <property type="evidence" value="ECO:0007669"/>
    <property type="project" value="TreeGrafter"/>
</dbReference>
<dbReference type="GO" id="GO:0031119">
    <property type="term" value="P:tRNA pseudouridine synthesis"/>
    <property type="evidence" value="ECO:0007669"/>
    <property type="project" value="UniProtKB-UniRule"/>
</dbReference>
<dbReference type="CDD" id="cd02573">
    <property type="entry name" value="PseudoU_synth_EcTruB"/>
    <property type="match status" value="1"/>
</dbReference>
<dbReference type="Gene3D" id="3.30.2350.10">
    <property type="entry name" value="Pseudouridine synthase"/>
    <property type="match status" value="1"/>
</dbReference>
<dbReference type="HAMAP" id="MF_01080">
    <property type="entry name" value="TruB_bact"/>
    <property type="match status" value="1"/>
</dbReference>
<dbReference type="InterPro" id="IPR020103">
    <property type="entry name" value="PsdUridine_synth_cat_dom_sf"/>
</dbReference>
<dbReference type="InterPro" id="IPR002501">
    <property type="entry name" value="PsdUridine_synth_N"/>
</dbReference>
<dbReference type="InterPro" id="IPR014780">
    <property type="entry name" value="tRNA_psdUridine_synth_TruB"/>
</dbReference>
<dbReference type="NCBIfam" id="TIGR00431">
    <property type="entry name" value="TruB"/>
    <property type="match status" value="1"/>
</dbReference>
<dbReference type="PANTHER" id="PTHR13767:SF2">
    <property type="entry name" value="PSEUDOURIDYLATE SYNTHASE TRUB1"/>
    <property type="match status" value="1"/>
</dbReference>
<dbReference type="PANTHER" id="PTHR13767">
    <property type="entry name" value="TRNA-PSEUDOURIDINE SYNTHASE"/>
    <property type="match status" value="1"/>
</dbReference>
<dbReference type="Pfam" id="PF01509">
    <property type="entry name" value="TruB_N"/>
    <property type="match status" value="1"/>
</dbReference>
<dbReference type="SUPFAM" id="SSF55120">
    <property type="entry name" value="Pseudouridine synthase"/>
    <property type="match status" value="1"/>
</dbReference>
<proteinExistence type="inferred from homology"/>
<gene>
    <name evidence="1" type="primary">truB</name>
    <name type="ordered locus">BB_0803</name>
</gene>
<protein>
    <recommendedName>
        <fullName evidence="1">tRNA pseudouridine synthase B</fullName>
        <ecNumber evidence="1">5.4.99.25</ecNumber>
    </recommendedName>
    <alternativeName>
        <fullName evidence="1">tRNA pseudouridine(55) synthase</fullName>
        <shortName evidence="1">Psi55 synthase</shortName>
    </alternativeName>
    <alternativeName>
        <fullName evidence="1">tRNA pseudouridylate synthase</fullName>
    </alternativeName>
    <alternativeName>
        <fullName evidence="1">tRNA-uridine isomerase</fullName>
    </alternativeName>
</protein>
<comment type="function">
    <text evidence="1">Responsible for synthesis of pseudouridine from uracil-55 in the psi GC loop of transfer RNAs.</text>
</comment>
<comment type="catalytic activity">
    <reaction evidence="1">
        <text>uridine(55) in tRNA = pseudouridine(55) in tRNA</text>
        <dbReference type="Rhea" id="RHEA:42532"/>
        <dbReference type="Rhea" id="RHEA-COMP:10101"/>
        <dbReference type="Rhea" id="RHEA-COMP:10102"/>
        <dbReference type="ChEBI" id="CHEBI:65314"/>
        <dbReference type="ChEBI" id="CHEBI:65315"/>
        <dbReference type="EC" id="5.4.99.25"/>
    </reaction>
</comment>
<comment type="similarity">
    <text evidence="1">Belongs to the pseudouridine synthase TruB family. Type 1 subfamily.</text>
</comment>
<accession>O51743</accession>
<evidence type="ECO:0000255" key="1">
    <source>
        <dbReference type="HAMAP-Rule" id="MF_01080"/>
    </source>
</evidence>
<organism>
    <name type="scientific">Borreliella burgdorferi (strain ATCC 35210 / DSM 4680 / CIP 102532 / B31)</name>
    <name type="common">Borrelia burgdorferi</name>
    <dbReference type="NCBI Taxonomy" id="224326"/>
    <lineage>
        <taxon>Bacteria</taxon>
        <taxon>Pseudomonadati</taxon>
        <taxon>Spirochaetota</taxon>
        <taxon>Spirochaetia</taxon>
        <taxon>Spirochaetales</taxon>
        <taxon>Borreliaceae</taxon>
        <taxon>Borreliella</taxon>
    </lineage>
</organism>
<name>TRUB_BORBU</name>
<sequence length="282" mass="32145">MENGFLLINKEQGKTSFETLFPIKKYFNTNRVGHAGTLDKFASGILVCLVGKYTKLSGYFTSLDKEYVAEFRFGLETDTLDPNGRIVSKTDYIPNVEDIDLKLKDFVGEIYQSPPRFSSVHIDGSRAYKLALNGKFFEIKKRKVTVYNIQRLSYDFSSSLLSLKISCSKGTYIRSIARDLAYSLNSCAYVSNLKRTKVGMFRLKDSTLCENLSKASLISLESLKSFEKVYIDSNKINLVKNGVYFEIEININEFKILKSREEKILAVIQGVGLNKYKYVIIF</sequence>
<feature type="chain" id="PRO_0000121798" description="tRNA pseudouridine synthase B">
    <location>
        <begin position="1"/>
        <end position="282"/>
    </location>
</feature>
<feature type="active site" description="Nucleophile" evidence="1">
    <location>
        <position position="39"/>
    </location>
</feature>
<keyword id="KW-0413">Isomerase</keyword>
<keyword id="KW-1185">Reference proteome</keyword>
<keyword id="KW-0819">tRNA processing</keyword>
<reference key="1">
    <citation type="journal article" date="1997" name="Nature">
        <title>Genomic sequence of a Lyme disease spirochaete, Borrelia burgdorferi.</title>
        <authorList>
            <person name="Fraser C.M."/>
            <person name="Casjens S."/>
            <person name="Huang W.M."/>
            <person name="Sutton G.G."/>
            <person name="Clayton R.A."/>
            <person name="Lathigra R."/>
            <person name="White O."/>
            <person name="Ketchum K.A."/>
            <person name="Dodson R.J."/>
            <person name="Hickey E.K."/>
            <person name="Gwinn M.L."/>
            <person name="Dougherty B.A."/>
            <person name="Tomb J.-F."/>
            <person name="Fleischmann R.D."/>
            <person name="Richardson D.L."/>
            <person name="Peterson J.D."/>
            <person name="Kerlavage A.R."/>
            <person name="Quackenbush J."/>
            <person name="Salzberg S.L."/>
            <person name="Hanson M."/>
            <person name="van Vugt R."/>
            <person name="Palmer N."/>
            <person name="Adams M.D."/>
            <person name="Gocayne J.D."/>
            <person name="Weidman J.F."/>
            <person name="Utterback T.R."/>
            <person name="Watthey L."/>
            <person name="McDonald L.A."/>
            <person name="Artiach P."/>
            <person name="Bowman C."/>
            <person name="Garland S.A."/>
            <person name="Fujii C."/>
            <person name="Cotton M.D."/>
            <person name="Horst K."/>
            <person name="Roberts K.M."/>
            <person name="Hatch B."/>
            <person name="Smith H.O."/>
            <person name="Venter J.C."/>
        </authorList>
    </citation>
    <scope>NUCLEOTIDE SEQUENCE [LARGE SCALE GENOMIC DNA]</scope>
    <source>
        <strain>ATCC 35210 / DSM 4680 / CIP 102532 / B31</strain>
    </source>
</reference>